<organism>
    <name type="scientific">Streptococcus pneumoniae serotype 19F (strain G54)</name>
    <dbReference type="NCBI Taxonomy" id="512566"/>
    <lineage>
        <taxon>Bacteria</taxon>
        <taxon>Bacillati</taxon>
        <taxon>Bacillota</taxon>
        <taxon>Bacilli</taxon>
        <taxon>Lactobacillales</taxon>
        <taxon>Streptococcaceae</taxon>
        <taxon>Streptococcus</taxon>
    </lineage>
</organism>
<protein>
    <recommendedName>
        <fullName evidence="1">Phosphoribosylaminoimidazole-succinocarboxamide synthase</fullName>
        <ecNumber evidence="1">6.3.2.6</ecNumber>
    </recommendedName>
    <alternativeName>
        <fullName evidence="1">SAICAR synthetase</fullName>
    </alternativeName>
</protein>
<comment type="catalytic activity">
    <reaction evidence="1">
        <text>5-amino-1-(5-phospho-D-ribosyl)imidazole-4-carboxylate + L-aspartate + ATP = (2S)-2-[5-amino-1-(5-phospho-beta-D-ribosyl)imidazole-4-carboxamido]succinate + ADP + phosphate + 2 H(+)</text>
        <dbReference type="Rhea" id="RHEA:22628"/>
        <dbReference type="ChEBI" id="CHEBI:15378"/>
        <dbReference type="ChEBI" id="CHEBI:29991"/>
        <dbReference type="ChEBI" id="CHEBI:30616"/>
        <dbReference type="ChEBI" id="CHEBI:43474"/>
        <dbReference type="ChEBI" id="CHEBI:58443"/>
        <dbReference type="ChEBI" id="CHEBI:77657"/>
        <dbReference type="ChEBI" id="CHEBI:456216"/>
        <dbReference type="EC" id="6.3.2.6"/>
    </reaction>
</comment>
<comment type="pathway">
    <text evidence="1">Purine metabolism; IMP biosynthesis via de novo pathway; 5-amino-1-(5-phospho-D-ribosyl)imidazole-4-carboxamide from 5-amino-1-(5-phospho-D-ribosyl)imidazole-4-carboxylate: step 1/2.</text>
</comment>
<comment type="similarity">
    <text evidence="1">Belongs to the SAICAR synthetase family.</text>
</comment>
<keyword id="KW-0067">ATP-binding</keyword>
<keyword id="KW-0436">Ligase</keyword>
<keyword id="KW-0547">Nucleotide-binding</keyword>
<keyword id="KW-0658">Purine biosynthesis</keyword>
<evidence type="ECO:0000255" key="1">
    <source>
        <dbReference type="HAMAP-Rule" id="MF_00137"/>
    </source>
</evidence>
<dbReference type="EC" id="6.3.2.6" evidence="1"/>
<dbReference type="EMBL" id="CP001015">
    <property type="protein sequence ID" value="ACF56499.1"/>
    <property type="molecule type" value="Genomic_DNA"/>
</dbReference>
<dbReference type="SMR" id="B5E5J3"/>
<dbReference type="KEGG" id="spx:SPG_0050"/>
<dbReference type="HOGENOM" id="CLU_061495_2_0_9"/>
<dbReference type="UniPathway" id="UPA00074">
    <property type="reaction ID" value="UER00131"/>
</dbReference>
<dbReference type="GO" id="GO:0005524">
    <property type="term" value="F:ATP binding"/>
    <property type="evidence" value="ECO:0007669"/>
    <property type="project" value="UniProtKB-KW"/>
</dbReference>
<dbReference type="GO" id="GO:0004639">
    <property type="term" value="F:phosphoribosylaminoimidazolesuccinocarboxamide synthase activity"/>
    <property type="evidence" value="ECO:0007669"/>
    <property type="project" value="UniProtKB-UniRule"/>
</dbReference>
<dbReference type="GO" id="GO:0006189">
    <property type="term" value="P:'de novo' IMP biosynthetic process"/>
    <property type="evidence" value="ECO:0007669"/>
    <property type="project" value="UniProtKB-UniRule"/>
</dbReference>
<dbReference type="GO" id="GO:0009236">
    <property type="term" value="P:cobalamin biosynthetic process"/>
    <property type="evidence" value="ECO:0007669"/>
    <property type="project" value="InterPro"/>
</dbReference>
<dbReference type="CDD" id="cd01415">
    <property type="entry name" value="SAICAR_synt_PurC"/>
    <property type="match status" value="1"/>
</dbReference>
<dbReference type="FunFam" id="3.30.200.20:FF:000189">
    <property type="entry name" value="Phosphoribosylaminoimidazole-succinocarboxamide synthase"/>
    <property type="match status" value="1"/>
</dbReference>
<dbReference type="FunFam" id="3.30.470.20:FF:000006">
    <property type="entry name" value="Phosphoribosylaminoimidazole-succinocarboxamide synthase"/>
    <property type="match status" value="1"/>
</dbReference>
<dbReference type="Gene3D" id="3.30.470.20">
    <property type="entry name" value="ATP-grasp fold, B domain"/>
    <property type="match status" value="1"/>
</dbReference>
<dbReference type="Gene3D" id="3.30.200.20">
    <property type="entry name" value="Phosphorylase Kinase, domain 1"/>
    <property type="match status" value="1"/>
</dbReference>
<dbReference type="HAMAP" id="MF_00137">
    <property type="entry name" value="SAICAR_synth"/>
    <property type="match status" value="1"/>
</dbReference>
<dbReference type="InterPro" id="IPR028923">
    <property type="entry name" value="SAICAR_synt/ADE2_N"/>
</dbReference>
<dbReference type="InterPro" id="IPR033934">
    <property type="entry name" value="SAICAR_synt_PurC"/>
</dbReference>
<dbReference type="InterPro" id="IPR001636">
    <property type="entry name" value="SAICAR_synth"/>
</dbReference>
<dbReference type="InterPro" id="IPR050089">
    <property type="entry name" value="SAICAR_synthetase"/>
</dbReference>
<dbReference type="InterPro" id="IPR018236">
    <property type="entry name" value="SAICAR_synthetase_CS"/>
</dbReference>
<dbReference type="NCBIfam" id="TIGR00081">
    <property type="entry name" value="purC"/>
    <property type="match status" value="1"/>
</dbReference>
<dbReference type="PANTHER" id="PTHR43599">
    <property type="entry name" value="MULTIFUNCTIONAL PROTEIN ADE2"/>
    <property type="match status" value="1"/>
</dbReference>
<dbReference type="PANTHER" id="PTHR43599:SF3">
    <property type="entry name" value="SI:DKEY-6E2.2"/>
    <property type="match status" value="1"/>
</dbReference>
<dbReference type="Pfam" id="PF01259">
    <property type="entry name" value="SAICAR_synt"/>
    <property type="match status" value="1"/>
</dbReference>
<dbReference type="SUPFAM" id="SSF56104">
    <property type="entry name" value="SAICAR synthase-like"/>
    <property type="match status" value="1"/>
</dbReference>
<dbReference type="PROSITE" id="PS01057">
    <property type="entry name" value="SAICAR_SYNTHETASE_1"/>
    <property type="match status" value="1"/>
</dbReference>
<dbReference type="PROSITE" id="PS01058">
    <property type="entry name" value="SAICAR_SYNTHETASE_2"/>
    <property type="match status" value="1"/>
</dbReference>
<accession>B5E5J3</accession>
<sequence length="235" mass="26903">MSKQLIYSGKAKDIYTTEDENLIISTYKDQATAFNGVKKEQIAGKGVLNNQISSFIFEKLNAAGVATHFVEKLSDTEQLNKKVKIIPLEVVLRNYTAGSFSKRFGVDEGIALETPIVEFYYKNDDLDDPFINDEHVKFLQIAGDQQIAYLKEETRRINELLKVWFAEIGLKLIDFKLEFGFDKDGKIILADEFSPDNCRLWDADGNHMDKDVFRRGLGELTDVYEIVWEKLQGLK</sequence>
<proteinExistence type="inferred from homology"/>
<reference key="1">
    <citation type="journal article" date="2001" name="Microb. Drug Resist.">
        <title>Annotated draft genomic sequence from a Streptococcus pneumoniae type 19F clinical isolate.</title>
        <authorList>
            <person name="Dopazo J."/>
            <person name="Mendoza A."/>
            <person name="Herrero J."/>
            <person name="Caldara F."/>
            <person name="Humbert Y."/>
            <person name="Friedli L."/>
            <person name="Guerrier M."/>
            <person name="Grand-Schenk E."/>
            <person name="Gandin C."/>
            <person name="de Francesco M."/>
            <person name="Polissi A."/>
            <person name="Buell G."/>
            <person name="Feger G."/>
            <person name="Garcia E."/>
            <person name="Peitsch M."/>
            <person name="Garcia-Bustos J.F."/>
        </authorList>
    </citation>
    <scope>NUCLEOTIDE SEQUENCE [LARGE SCALE GENOMIC DNA]</scope>
    <source>
        <strain>G54</strain>
    </source>
</reference>
<reference key="2">
    <citation type="submission" date="2008-03" db="EMBL/GenBank/DDBJ databases">
        <title>Pneumococcal beta glucoside metabolism investigated by whole genome comparison.</title>
        <authorList>
            <person name="Mulas L."/>
            <person name="Trappetti C."/>
            <person name="Hakenbeck R."/>
            <person name="Iannelli F."/>
            <person name="Pozzi G."/>
            <person name="Davidsen T.M."/>
            <person name="Tettelin H."/>
            <person name="Oggioni M."/>
        </authorList>
    </citation>
    <scope>NUCLEOTIDE SEQUENCE [LARGE SCALE GENOMIC DNA]</scope>
    <source>
        <strain>G54</strain>
    </source>
</reference>
<gene>
    <name evidence="1" type="primary">purC</name>
    <name type="ordered locus">SPG_0050</name>
</gene>
<feature type="chain" id="PRO_1000096020" description="Phosphoribosylaminoimidazole-succinocarboxamide synthase">
    <location>
        <begin position="1"/>
        <end position="235"/>
    </location>
</feature>
<name>PUR7_STRP4</name>